<comment type="function">
    <text>Facilitative glucose transporter.</text>
</comment>
<comment type="subcellular location">
    <subcellularLocation>
        <location>Membrane</location>
        <topology>Multi-pass membrane protein</topology>
    </subcellularLocation>
</comment>
<comment type="developmental stage">
    <text>Expressed in both bloodstream and procyclic forms.</text>
</comment>
<comment type="similarity">
    <text evidence="3">Belongs to the major facilitator superfamily. Sugar transporter (TC 2.A.1.1) family.</text>
</comment>
<evidence type="ECO:0000255" key="1"/>
<evidence type="ECO:0000256" key="2">
    <source>
        <dbReference type="SAM" id="MobiDB-lite"/>
    </source>
</evidence>
<evidence type="ECO:0000305" key="3"/>
<keyword id="KW-0472">Membrane</keyword>
<keyword id="KW-0762">Sugar transport</keyword>
<keyword id="KW-0812">Transmembrane</keyword>
<keyword id="KW-1133">Transmembrane helix</keyword>
<keyword id="KW-0813">Transport</keyword>
<organism>
    <name type="scientific">Trypanosoma brucei brucei</name>
    <dbReference type="NCBI Taxonomy" id="5702"/>
    <lineage>
        <taxon>Eukaryota</taxon>
        <taxon>Discoba</taxon>
        <taxon>Euglenozoa</taxon>
        <taxon>Kinetoplastea</taxon>
        <taxon>Metakinetoplastina</taxon>
        <taxon>Trypanosomatida</taxon>
        <taxon>Trypanosomatidae</taxon>
        <taxon>Trypanosoma</taxon>
    </lineage>
</organism>
<name>TH2A_TRYBB</name>
<gene>
    <name type="primary">THT2A</name>
</gene>
<reference key="1">
    <citation type="journal article" date="1993" name="Mol. Cell. Biol.">
        <title>Differential regulation of two distinct families of glucose transporter genes in Trypanosoma brucei.</title>
        <authorList>
            <person name="Bringaud F."/>
            <person name="Baltz T."/>
        </authorList>
    </citation>
    <scope>NUCLEOTIDE SEQUENCE [GENOMIC DNA]</scope>
    <source>
        <strain>EATRO 164</strain>
    </source>
</reference>
<sequence length="529" mass="57005">MTERRDNVSHAPDAIEGPNDGAHAEDTSPGFFSFENLGVAQVQVVGGTLNGFSIGFVAVYILLYEVATNCSLFKTTEACKAVGSYGCEWKDTEVCSWKKECDSDSDGVNPCESLIGYSSLYSGIFASAMIVGSMVGSIIAGKCITMFGLKKSFIIVGVMSVVASALNHISVATNEFWVLCAGRVLMGIGLGVVCVICPMYVNENAHPKLSKVDGVLFQVFITFGIMLAAMLGLILDKTVNYDNDPDMAGRFHGFCAVSSVLSVAMFLVGMFLRESTATFSQDDDGKADGGMDPNEYGWGQMLWPLFMGAVTAGTLQLTGINAVMNYAPKITENLGMDPSLGNFLVMAWNFVTSLVAIPLASRFTMRQMFITCSFVASCMCLFLCGIPVFPGVAEEKVKNGVATTGIALFIAAFEFGVGSCFFVLAQDLFPPSFRPKGSSFVVMMQFIFNILINLLYPITTEAISGGATGDQDKGQAVVFILFGLIGLICFVLQFFYLYPYDANQDHENDHGTEPVERILSPVDVPTPRN</sequence>
<dbReference type="EMBL" id="X69091">
    <property type="protein sequence ID" value="CAA48839.1"/>
    <property type="molecule type" value="Genomic_DNA"/>
</dbReference>
<dbReference type="SMR" id="Q06222"/>
<dbReference type="TCDB" id="2.A.1.1.18">
    <property type="family name" value="the major facilitator superfamily (mfs)"/>
</dbReference>
<dbReference type="GO" id="GO:0016020">
    <property type="term" value="C:membrane"/>
    <property type="evidence" value="ECO:0007669"/>
    <property type="project" value="UniProtKB-SubCell"/>
</dbReference>
<dbReference type="GO" id="GO:0015149">
    <property type="term" value="F:hexose transmembrane transporter activity"/>
    <property type="evidence" value="ECO:0000315"/>
    <property type="project" value="GeneDB"/>
</dbReference>
<dbReference type="GO" id="GO:0008645">
    <property type="term" value="P:hexose transmembrane transport"/>
    <property type="evidence" value="ECO:0000314"/>
    <property type="project" value="GeneDB"/>
</dbReference>
<dbReference type="CDD" id="cd17315">
    <property type="entry name" value="MFS_GLUT_like"/>
    <property type="match status" value="1"/>
</dbReference>
<dbReference type="FunFam" id="1.20.1250.20:FF:000857">
    <property type="entry name" value="Glucose transporter 1B/1C/1D/1F/2B"/>
    <property type="match status" value="1"/>
</dbReference>
<dbReference type="FunFam" id="1.20.1250.20:FF:000357">
    <property type="entry name" value="Glucose transporter, lmgt1"/>
    <property type="match status" value="1"/>
</dbReference>
<dbReference type="Gene3D" id="1.20.1250.20">
    <property type="entry name" value="MFS general substrate transporter like domains"/>
    <property type="match status" value="2"/>
</dbReference>
<dbReference type="InterPro" id="IPR045263">
    <property type="entry name" value="GLUT"/>
</dbReference>
<dbReference type="InterPro" id="IPR020846">
    <property type="entry name" value="MFS_dom"/>
</dbReference>
<dbReference type="InterPro" id="IPR005828">
    <property type="entry name" value="MFS_sugar_transport-like"/>
</dbReference>
<dbReference type="InterPro" id="IPR036259">
    <property type="entry name" value="MFS_trans_sf"/>
</dbReference>
<dbReference type="InterPro" id="IPR003663">
    <property type="entry name" value="Sugar/inositol_transpt"/>
</dbReference>
<dbReference type="NCBIfam" id="TIGR00879">
    <property type="entry name" value="SP"/>
    <property type="match status" value="1"/>
</dbReference>
<dbReference type="PANTHER" id="PTHR23503:SF8">
    <property type="entry name" value="FACILITATED GLUCOSE TRANSPORTER PROTEIN 1"/>
    <property type="match status" value="1"/>
</dbReference>
<dbReference type="PANTHER" id="PTHR23503">
    <property type="entry name" value="SOLUTE CARRIER FAMILY 2"/>
    <property type="match status" value="1"/>
</dbReference>
<dbReference type="Pfam" id="PF00083">
    <property type="entry name" value="Sugar_tr"/>
    <property type="match status" value="1"/>
</dbReference>
<dbReference type="PRINTS" id="PR00171">
    <property type="entry name" value="SUGRTRNSPORT"/>
</dbReference>
<dbReference type="SUPFAM" id="SSF103473">
    <property type="entry name" value="MFS general substrate transporter"/>
    <property type="match status" value="1"/>
</dbReference>
<dbReference type="PROSITE" id="PS50850">
    <property type="entry name" value="MFS"/>
    <property type="match status" value="1"/>
</dbReference>
<feature type="chain" id="PRO_0000050387" description="Glucose transporter 2A">
    <location>
        <begin position="1"/>
        <end position="529"/>
    </location>
</feature>
<feature type="topological domain" description="Cytoplasmic" evidence="1">
    <location>
        <begin position="1"/>
        <end position="43"/>
    </location>
</feature>
<feature type="transmembrane region" description="Helical; Name=1" evidence="1">
    <location>
        <begin position="44"/>
        <end position="64"/>
    </location>
</feature>
<feature type="topological domain" description="Extracellular" evidence="1">
    <location>
        <begin position="65"/>
        <end position="119"/>
    </location>
</feature>
<feature type="transmembrane region" description="Helical; Name=2" evidence="1">
    <location>
        <begin position="120"/>
        <end position="140"/>
    </location>
</feature>
<feature type="topological domain" description="Cytoplasmic" evidence="1">
    <location>
        <begin position="141"/>
        <end position="152"/>
    </location>
</feature>
<feature type="transmembrane region" description="Helical; Name=3" evidence="1">
    <location>
        <begin position="153"/>
        <end position="173"/>
    </location>
</feature>
<feature type="topological domain" description="Extracellular" evidence="1">
    <location>
        <begin position="174"/>
        <end position="175"/>
    </location>
</feature>
<feature type="transmembrane region" description="Helical; Name=4" evidence="1">
    <location>
        <begin position="176"/>
        <end position="196"/>
    </location>
</feature>
<feature type="topological domain" description="Cytoplasmic" evidence="1">
    <location>
        <begin position="197"/>
        <end position="214"/>
    </location>
</feature>
<feature type="transmembrane region" description="Helical; Name=5" evidence="1">
    <location>
        <begin position="215"/>
        <end position="235"/>
    </location>
</feature>
<feature type="topological domain" description="Extracellular" evidence="1">
    <location>
        <begin position="236"/>
        <end position="250"/>
    </location>
</feature>
<feature type="transmembrane region" description="Helical; Name=6" evidence="1">
    <location>
        <begin position="251"/>
        <end position="271"/>
    </location>
</feature>
<feature type="topological domain" description="Cytoplasmic" evidence="1">
    <location>
        <begin position="272"/>
        <end position="300"/>
    </location>
</feature>
<feature type="transmembrane region" description="Helical; Name=7" evidence="1">
    <location>
        <begin position="301"/>
        <end position="321"/>
    </location>
</feature>
<feature type="topological domain" description="Extracellular" evidence="1">
    <location>
        <begin position="322"/>
        <end position="339"/>
    </location>
</feature>
<feature type="transmembrane region" description="Helical; Name=8" evidence="1">
    <location>
        <begin position="340"/>
        <end position="360"/>
    </location>
</feature>
<feature type="topological domain" description="Cytoplasmic" evidence="1">
    <location>
        <begin position="361"/>
        <end position="368"/>
    </location>
</feature>
<feature type="transmembrane region" description="Helical; Name=9" evidence="1">
    <location>
        <begin position="369"/>
        <end position="389"/>
    </location>
</feature>
<feature type="topological domain" description="Extracellular" evidence="1">
    <location>
        <begin position="390"/>
        <end position="404"/>
    </location>
</feature>
<feature type="transmembrane region" description="Helical; Name=10" evidence="1">
    <location>
        <begin position="405"/>
        <end position="425"/>
    </location>
</feature>
<feature type="topological domain" description="Cytoplasmic" evidence="1">
    <location>
        <begin position="426"/>
        <end position="439"/>
    </location>
</feature>
<feature type="transmembrane region" description="Helical; Name=11" evidence="1">
    <location>
        <begin position="440"/>
        <end position="460"/>
    </location>
</feature>
<feature type="topological domain" description="Extracellular" evidence="1">
    <location>
        <begin position="461"/>
        <end position="476"/>
    </location>
</feature>
<feature type="transmembrane region" description="Helical; Name=12" evidence="1">
    <location>
        <begin position="477"/>
        <end position="497"/>
    </location>
</feature>
<feature type="topological domain" description="Cytoplasmic" evidence="1">
    <location>
        <begin position="498"/>
        <end position="529"/>
    </location>
</feature>
<feature type="region of interest" description="Disordered" evidence="2">
    <location>
        <begin position="1"/>
        <end position="22"/>
    </location>
</feature>
<feature type="region of interest" description="Disordered" evidence="2">
    <location>
        <begin position="508"/>
        <end position="529"/>
    </location>
</feature>
<accession>Q06222</accession>
<protein>
    <recommendedName>
        <fullName>Glucose transporter 2A</fullName>
    </recommendedName>
</protein>
<proteinExistence type="evidence at transcript level"/>